<dbReference type="EMBL" id="AP012217">
    <property type="protein sequence ID" value="BAO41287.1"/>
    <property type="molecule type" value="Genomic_DNA"/>
</dbReference>
<dbReference type="RefSeq" id="XP_022677081.1">
    <property type="nucleotide sequence ID" value="XM_022820637.1"/>
</dbReference>
<dbReference type="GeneID" id="34717223"/>
<dbReference type="VEuPathDB" id="FungiDB:KLMA_50633"/>
<dbReference type="OrthoDB" id="18982at2759"/>
<dbReference type="Proteomes" id="UP000065495">
    <property type="component" value="Chromosome 5"/>
</dbReference>
<dbReference type="GO" id="GO:0005789">
    <property type="term" value="C:endoplasmic reticulum membrane"/>
    <property type="evidence" value="ECO:0007669"/>
    <property type="project" value="UniProtKB-SubCell"/>
</dbReference>
<dbReference type="GO" id="GO:0061908">
    <property type="term" value="C:phagophore"/>
    <property type="evidence" value="ECO:0007669"/>
    <property type="project" value="TreeGrafter"/>
</dbReference>
<dbReference type="GO" id="GO:0034045">
    <property type="term" value="C:phagophore assembly site membrane"/>
    <property type="evidence" value="ECO:0007669"/>
    <property type="project" value="UniProtKB-SubCell"/>
</dbReference>
<dbReference type="GO" id="GO:0032266">
    <property type="term" value="F:phosphatidylinositol-3-phosphate binding"/>
    <property type="evidence" value="ECO:0007669"/>
    <property type="project" value="TreeGrafter"/>
</dbReference>
<dbReference type="GO" id="GO:0043495">
    <property type="term" value="F:protein-membrane adaptor activity"/>
    <property type="evidence" value="ECO:0007669"/>
    <property type="project" value="TreeGrafter"/>
</dbReference>
<dbReference type="GO" id="GO:0000045">
    <property type="term" value="P:autophagosome assembly"/>
    <property type="evidence" value="ECO:0007669"/>
    <property type="project" value="TreeGrafter"/>
</dbReference>
<dbReference type="GO" id="GO:0000422">
    <property type="term" value="P:autophagy of mitochondrion"/>
    <property type="evidence" value="ECO:0007669"/>
    <property type="project" value="TreeGrafter"/>
</dbReference>
<dbReference type="GO" id="GO:0061723">
    <property type="term" value="P:glycophagy"/>
    <property type="evidence" value="ECO:0007669"/>
    <property type="project" value="TreeGrafter"/>
</dbReference>
<dbReference type="GO" id="GO:0006869">
    <property type="term" value="P:lipid transport"/>
    <property type="evidence" value="ECO:0007669"/>
    <property type="project" value="UniProtKB-KW"/>
</dbReference>
<dbReference type="GO" id="GO:0034727">
    <property type="term" value="P:piecemeal microautophagy of the nucleus"/>
    <property type="evidence" value="ECO:0007669"/>
    <property type="project" value="TreeGrafter"/>
</dbReference>
<dbReference type="GO" id="GO:0015031">
    <property type="term" value="P:protein transport"/>
    <property type="evidence" value="ECO:0007669"/>
    <property type="project" value="UniProtKB-KW"/>
</dbReference>
<dbReference type="GO" id="GO:0061709">
    <property type="term" value="P:reticulophagy"/>
    <property type="evidence" value="ECO:0007669"/>
    <property type="project" value="TreeGrafter"/>
</dbReference>
<dbReference type="InterPro" id="IPR026849">
    <property type="entry name" value="ATG2"/>
</dbReference>
<dbReference type="PANTHER" id="PTHR13190">
    <property type="entry name" value="AUTOPHAGY-RELATED 2, ISOFORM A"/>
    <property type="match status" value="1"/>
</dbReference>
<dbReference type="PANTHER" id="PTHR13190:SF1">
    <property type="entry name" value="AUTOPHAGY-RELATED 2, ISOFORM A"/>
    <property type="match status" value="1"/>
</dbReference>
<dbReference type="Pfam" id="PF13329">
    <property type="entry name" value="ATG2_CAD"/>
    <property type="match status" value="1"/>
</dbReference>
<proteinExistence type="inferred from homology"/>
<protein>
    <recommendedName>
        <fullName evidence="5">Autophagy-related protein 2</fullName>
    </recommendedName>
</protein>
<comment type="function">
    <text evidence="2">Lipid transfer protein required for autophagosome completion and peroxisome degradation. Tethers the edge of the isolation membrane (IM) to the endoplasmic reticulum (ER) and mediates direct lipid transfer from ER to IM for IM expansion. ATG2 binds to the ER exit site (ERES), which is the membrane source for autophagosome formation, using basic residues in its N-terminal region (NR) and to the expanding edge of the IM through its C-terminal region. The latter binding is assisted by an ATG18-PtdIns3P interaction. ATG2 then extracts phospholipids from the membrane source using its NR and transfers them to ATG9 to the IM through its predicted beta-sheet-rich structure for membrane expansion.</text>
</comment>
<comment type="catalytic activity">
    <reaction evidence="1">
        <text>a 1,2-diacyl-sn-glycero-3-phosphocholine(in) = a 1,2-diacyl-sn-glycero-3-phosphocholine(out)</text>
        <dbReference type="Rhea" id="RHEA:38571"/>
        <dbReference type="ChEBI" id="CHEBI:57643"/>
    </reaction>
</comment>
<comment type="catalytic activity">
    <reaction evidence="1">
        <text>a 1,2-diacyl-sn-glycero-3-phospho-L-serine(in) = a 1,2-diacyl-sn-glycero-3-phospho-L-serine(out)</text>
        <dbReference type="Rhea" id="RHEA:38663"/>
        <dbReference type="ChEBI" id="CHEBI:57262"/>
    </reaction>
</comment>
<comment type="catalytic activity">
    <reaction evidence="1">
        <text>a 1,2-diacyl-sn-glycero-3-phosphoethanolamine(in) = a 1,2-diacyl-sn-glycero-3-phosphoethanolamine(out)</text>
        <dbReference type="Rhea" id="RHEA:38895"/>
        <dbReference type="ChEBI" id="CHEBI:64612"/>
    </reaction>
</comment>
<comment type="subcellular location">
    <subcellularLocation>
        <location evidence="2">Preautophagosomal structure membrane</location>
        <topology evidence="2">Peripheral membrane protein</topology>
    </subcellularLocation>
    <subcellularLocation>
        <location evidence="2">Endoplasmic reticulum membrane</location>
        <topology evidence="2">Peripheral membrane protein</topology>
    </subcellularLocation>
</comment>
<comment type="disruption phenotype">
    <text evidence="4">Still forms preautophagosomal structures (PAS) in proximity to the vacuolar membrane (PubMed:26442587).</text>
</comment>
<comment type="miscellaneous">
    <text evidence="4">Kluyveromyces marxianus proteins are shorter in length and have a more ordered secondary structure than their S.cerevisiae counterparts, which might contribute to the superior thermotolerance and solubility (PubMed:26442587). K.marxianus could be therefore useful as a new model organism for further elucidation of the molecular details of autophagy (PubMed:26442587).</text>
</comment>
<comment type="similarity">
    <text evidence="6">Belongs to the ATG2 family.</text>
</comment>
<name>ATG2_KLUMD</name>
<organism>
    <name type="scientific">Kluyveromyces marxianus (strain DMKU3-1042 / BCC 29191 / NBRC 104275)</name>
    <name type="common">Yeast</name>
    <name type="synonym">Candida kefyr</name>
    <dbReference type="NCBI Taxonomy" id="1003335"/>
    <lineage>
        <taxon>Eukaryota</taxon>
        <taxon>Fungi</taxon>
        <taxon>Dikarya</taxon>
        <taxon>Ascomycota</taxon>
        <taxon>Saccharomycotina</taxon>
        <taxon>Saccharomycetes</taxon>
        <taxon>Saccharomycetales</taxon>
        <taxon>Saccharomycetaceae</taxon>
        <taxon>Kluyveromyces</taxon>
    </lineage>
</organism>
<feature type="chain" id="PRO_0000443867" description="Autophagy-related protein 2">
    <location>
        <begin position="1"/>
        <end position="1499"/>
    </location>
</feature>
<feature type="region of interest" description="Disordered" evidence="3">
    <location>
        <begin position="211"/>
        <end position="237"/>
    </location>
</feature>
<feature type="compositionally biased region" description="Polar residues" evidence="3">
    <location>
        <begin position="211"/>
        <end position="221"/>
    </location>
</feature>
<feature type="compositionally biased region" description="Acidic residues" evidence="3">
    <location>
        <begin position="224"/>
        <end position="234"/>
    </location>
</feature>
<gene>
    <name evidence="5" type="primary">ATG2</name>
    <name type="ORF">KLMA_50633</name>
</gene>
<accession>W0TCD0</accession>
<sequence length="1499" mass="168691">MTSWLPQNLQKRLLLYTIKQVSLFSNVDVSNLDVSIGSQSHFGFTDIDLNVCEINLPNIEVLSGRISKLNLQLAVAGNVEISGEGMVFVLKPADGFFDDDSSEQWASSLTKSVMDMTKSILDTELSEYQSKIYKDTNEDIKPPTALDSMMDKVLRVALSKLTINLKNVELQLIISPELMLKISISEVKMISADEKRIADVIGVSAVFSKPEQSVPSYGSSSSDKEDDNTSDSEDPLSTSITYSKLEATSIYLSAMESLVLDSLDGETYQFLNIDKIEVQFQGITSINDLKVHDLKIKINALDIHLENVSSILSHIMSLLNHVQLSNSEDKIRTQELKSYKRFQHEQNIEEDKTLTFVLLNSLKFHLRDNLFIMLTEISLNSSVSPYTSVSISDIQLVLDSKEYINRSDSSEPFLSLNKNSSTSEQKLHLNRDIKVEVDYSLMKQLILFANDYMCLYNQIIERPSTYADPSADPKFLLSSQNVCFLLNLGDLIMEFHFSPFFSNIPHTTFKIPKLSIFSVQNNEKSHIGELTDFEFHSRKSGCFNISGANSKFCASNVNTKTKATLENLEVSILESDMNKIIQCLSGVLGSLPELLLSSGETTSSKNMEKRSVRMMQSSAFLHNRTALSMFCVQINCMKIKISNISGKAFGDLMITARKSLIYQDKYSDLSISFTEFTAQRQYRSEKTDIIFDINHDSNIANFVINRTKVGKIKAYLTGVGIFIHTKWSELFSGQKTENSINEQKKNAKTLVSIPIDIKLYDCALSLKPCRLSTGLAINIPRAQINITKNEITLSTKILDLLLIDDMNLIHETDLGHTTSTSNWYEKQGYSSLVKIDTLSVRFCPGGVASTRVNVHKIDSSICSDSFNALIQTIIDLKPVVTYPENVKYQLEPELVSVFEDLTDQYFTTARISENDLEIYPDTYSNSGESLVFEENYFSPKLESPSKNEVNMAVFEILSNVKISVDEIKLKLYDGYDWKHTRKEINSAVEQLEENFKDGLSCPDAKVFDSIYIPAPRDEDENIKSNINMKIHNEETKEGKMKLRPTKKYKILIQGNGIKVNIQSGNDELRTTSTLPLSDNTYDILNETSVQINNLEIVDNLPTSTWNKFLTRTKLKTTNTLQQSPMFSLRFTMIRPTPHLYATELIFSVHVKPISLHVDQDALEFLTLFFQFKDPRFELIDDYPDIPYIQRFEINSVKILLDYKPKKVDYVGLRSGKTKEFMNFFILDQAKINLKHVILYGIDGFSRLETILTDIWTPDITKTQLPGILGALTPFKPFAGLSYGARALVSVPTEQYQQSGRLGTSLQKGGMVFLRTTGGEFVKLAVRLTSGTQTILESTEKLLGGQGSNGRNIKIKLVEGDEIVDAFIDESILRSTTLFDNTANDNNHLDVILPQGDTQKVISLYADQPKDFYSGLHDAYSSFGRNLNITFDSMKQAKNDIKTANGAQEAVSTVAKAAPLALIRPLIGVTEALSKTLQGLNNQYDQEEIAHIEEKYKSSN</sequence>
<reference key="1">
    <citation type="journal article" date="2015" name="Biotechnol. Biofuels">
        <title>Genetic basis of the highly efficient yeast Kluyveromyces marxianus: complete genome sequence and transcriptome analyses.</title>
        <authorList>
            <person name="Lertwattanasakul N."/>
            <person name="Kosaka T."/>
            <person name="Hosoyama A."/>
            <person name="Suzuki Y."/>
            <person name="Rodrussamee N."/>
            <person name="Matsutani M."/>
            <person name="Murata M."/>
            <person name="Fujimoto N."/>
            <person name="Suprayogi X."/>
            <person name="Tsuchikane K."/>
            <person name="Limtong S."/>
            <person name="Fujita N."/>
            <person name="Yamada M."/>
        </authorList>
    </citation>
    <scope>NUCLEOTIDE SEQUENCE [LARGE SCALE GENOMIC DNA]</scope>
    <source>
        <strain>DMKU3-1042 / BCC 29191 / NBRC 104275</strain>
    </source>
</reference>
<reference key="2">
    <citation type="journal article" date="2015" name="J. Biol. Chem.">
        <title>The thermotolerant yeast Kluyveromyces marxianus is a useful organism for structural and biochemical studies of autophagy.</title>
        <authorList>
            <person name="Yamamoto H."/>
            <person name="Shima T."/>
            <person name="Yamaguchi M."/>
            <person name="Mochizuki Y."/>
            <person name="Hoshida H."/>
            <person name="Kakuta S."/>
            <person name="Kondo-Kakuta C."/>
            <person name="Noda N.N."/>
            <person name="Inagaki F."/>
            <person name="Itoh T."/>
            <person name="Akada R."/>
            <person name="Ohsumi Y."/>
        </authorList>
    </citation>
    <scope>IDENTIFICATION</scope>
    <scope>DISRUPTION PHENOTYPE</scope>
</reference>
<keyword id="KW-0072">Autophagy</keyword>
<keyword id="KW-0256">Endoplasmic reticulum</keyword>
<keyword id="KW-0445">Lipid transport</keyword>
<keyword id="KW-0472">Membrane</keyword>
<keyword id="KW-0653">Protein transport</keyword>
<keyword id="KW-0813">Transport</keyword>
<evidence type="ECO:0000250" key="1">
    <source>
        <dbReference type="UniProtKB" id="O94649"/>
    </source>
</evidence>
<evidence type="ECO:0000250" key="2">
    <source>
        <dbReference type="UniProtKB" id="P53855"/>
    </source>
</evidence>
<evidence type="ECO:0000256" key="3">
    <source>
        <dbReference type="SAM" id="MobiDB-lite"/>
    </source>
</evidence>
<evidence type="ECO:0000269" key="4">
    <source>
    </source>
</evidence>
<evidence type="ECO:0000303" key="5">
    <source>
    </source>
</evidence>
<evidence type="ECO:0000305" key="6"/>